<proteinExistence type="inferred from homology"/>
<gene>
    <name evidence="1" type="primary">ilvD</name>
    <name type="ordered locus">SeSA_A4114</name>
</gene>
<accession>B4TNS1</accession>
<organism>
    <name type="scientific">Salmonella schwarzengrund (strain CVM19633)</name>
    <dbReference type="NCBI Taxonomy" id="439843"/>
    <lineage>
        <taxon>Bacteria</taxon>
        <taxon>Pseudomonadati</taxon>
        <taxon>Pseudomonadota</taxon>
        <taxon>Gammaproteobacteria</taxon>
        <taxon>Enterobacterales</taxon>
        <taxon>Enterobacteriaceae</taxon>
        <taxon>Salmonella</taxon>
    </lineage>
</organism>
<keyword id="KW-0001">2Fe-2S</keyword>
<keyword id="KW-0028">Amino-acid biosynthesis</keyword>
<keyword id="KW-0100">Branched-chain amino acid biosynthesis</keyword>
<keyword id="KW-0408">Iron</keyword>
<keyword id="KW-0411">Iron-sulfur</keyword>
<keyword id="KW-0456">Lyase</keyword>
<keyword id="KW-0460">Magnesium</keyword>
<keyword id="KW-0479">Metal-binding</keyword>
<comment type="function">
    <text evidence="1">Functions in the biosynthesis of branched-chain amino acids. Catalyzes the dehydration of (2R,3R)-2,3-dihydroxy-3-methylpentanoate (2,3-dihydroxy-3-methylvalerate) into 2-oxo-3-methylpentanoate (2-oxo-3-methylvalerate) and of (2R)-2,3-dihydroxy-3-methylbutanoate (2,3-dihydroxyisovalerate) into 2-oxo-3-methylbutanoate (2-oxoisovalerate), the penultimate precursor to L-isoleucine and L-valine, respectively.</text>
</comment>
<comment type="catalytic activity">
    <reaction evidence="1">
        <text>(2R)-2,3-dihydroxy-3-methylbutanoate = 3-methyl-2-oxobutanoate + H2O</text>
        <dbReference type="Rhea" id="RHEA:24809"/>
        <dbReference type="ChEBI" id="CHEBI:11851"/>
        <dbReference type="ChEBI" id="CHEBI:15377"/>
        <dbReference type="ChEBI" id="CHEBI:49072"/>
        <dbReference type="EC" id="4.2.1.9"/>
    </reaction>
    <physiologicalReaction direction="left-to-right" evidence="1">
        <dbReference type="Rhea" id="RHEA:24810"/>
    </physiologicalReaction>
</comment>
<comment type="catalytic activity">
    <reaction evidence="1">
        <text>(2R,3R)-2,3-dihydroxy-3-methylpentanoate = (S)-3-methyl-2-oxopentanoate + H2O</text>
        <dbReference type="Rhea" id="RHEA:27694"/>
        <dbReference type="ChEBI" id="CHEBI:15377"/>
        <dbReference type="ChEBI" id="CHEBI:35146"/>
        <dbReference type="ChEBI" id="CHEBI:49258"/>
        <dbReference type="EC" id="4.2.1.9"/>
    </reaction>
    <physiologicalReaction direction="left-to-right" evidence="1">
        <dbReference type="Rhea" id="RHEA:27695"/>
    </physiologicalReaction>
</comment>
<comment type="cofactor">
    <cofactor evidence="1">
        <name>[2Fe-2S] cluster</name>
        <dbReference type="ChEBI" id="CHEBI:190135"/>
    </cofactor>
    <text evidence="1">Binds 1 [2Fe-2S] cluster per subunit. This cluster acts as a Lewis acid cofactor.</text>
</comment>
<comment type="cofactor">
    <cofactor evidence="1">
        <name>Mg(2+)</name>
        <dbReference type="ChEBI" id="CHEBI:18420"/>
    </cofactor>
</comment>
<comment type="pathway">
    <text evidence="1">Amino-acid biosynthesis; L-isoleucine biosynthesis; L-isoleucine from 2-oxobutanoate: step 3/4.</text>
</comment>
<comment type="pathway">
    <text evidence="1">Amino-acid biosynthesis; L-valine biosynthesis; L-valine from pyruvate: step 3/4.</text>
</comment>
<comment type="subunit">
    <text evidence="1">Homodimer.</text>
</comment>
<comment type="similarity">
    <text evidence="1">Belongs to the IlvD/Edd family.</text>
</comment>
<dbReference type="EC" id="4.2.1.9" evidence="1"/>
<dbReference type="EMBL" id="CP001127">
    <property type="protein sequence ID" value="ACF92522.1"/>
    <property type="molecule type" value="Genomic_DNA"/>
</dbReference>
<dbReference type="RefSeq" id="WP_001127441.1">
    <property type="nucleotide sequence ID" value="NC_011094.1"/>
</dbReference>
<dbReference type="SMR" id="B4TNS1"/>
<dbReference type="KEGG" id="sew:SeSA_A4114"/>
<dbReference type="HOGENOM" id="CLU_014271_4_2_6"/>
<dbReference type="UniPathway" id="UPA00047">
    <property type="reaction ID" value="UER00057"/>
</dbReference>
<dbReference type="UniPathway" id="UPA00049">
    <property type="reaction ID" value="UER00061"/>
</dbReference>
<dbReference type="Proteomes" id="UP000001865">
    <property type="component" value="Chromosome"/>
</dbReference>
<dbReference type="GO" id="GO:0005829">
    <property type="term" value="C:cytosol"/>
    <property type="evidence" value="ECO:0007669"/>
    <property type="project" value="TreeGrafter"/>
</dbReference>
<dbReference type="GO" id="GO:0051537">
    <property type="term" value="F:2 iron, 2 sulfur cluster binding"/>
    <property type="evidence" value="ECO:0007669"/>
    <property type="project" value="UniProtKB-UniRule"/>
</dbReference>
<dbReference type="GO" id="GO:0004160">
    <property type="term" value="F:dihydroxy-acid dehydratase activity"/>
    <property type="evidence" value="ECO:0007669"/>
    <property type="project" value="UniProtKB-UniRule"/>
</dbReference>
<dbReference type="GO" id="GO:0000287">
    <property type="term" value="F:magnesium ion binding"/>
    <property type="evidence" value="ECO:0007669"/>
    <property type="project" value="UniProtKB-UniRule"/>
</dbReference>
<dbReference type="GO" id="GO:0009097">
    <property type="term" value="P:isoleucine biosynthetic process"/>
    <property type="evidence" value="ECO:0007669"/>
    <property type="project" value="UniProtKB-UniRule"/>
</dbReference>
<dbReference type="GO" id="GO:0009099">
    <property type="term" value="P:L-valine biosynthetic process"/>
    <property type="evidence" value="ECO:0007669"/>
    <property type="project" value="UniProtKB-UniRule"/>
</dbReference>
<dbReference type="FunFam" id="3.50.30.80:FF:000001">
    <property type="entry name" value="Dihydroxy-acid dehydratase"/>
    <property type="match status" value="1"/>
</dbReference>
<dbReference type="Gene3D" id="3.50.30.80">
    <property type="entry name" value="IlvD/EDD C-terminal domain-like"/>
    <property type="match status" value="1"/>
</dbReference>
<dbReference type="HAMAP" id="MF_00012">
    <property type="entry name" value="IlvD"/>
    <property type="match status" value="1"/>
</dbReference>
<dbReference type="InterPro" id="IPR042096">
    <property type="entry name" value="Dihydro-acid_dehy_C"/>
</dbReference>
<dbReference type="InterPro" id="IPR004404">
    <property type="entry name" value="DihydroxyA_deHydtase"/>
</dbReference>
<dbReference type="InterPro" id="IPR020558">
    <property type="entry name" value="DiOHA_6PGluconate_deHydtase_CS"/>
</dbReference>
<dbReference type="InterPro" id="IPR056740">
    <property type="entry name" value="ILV_EDD_C"/>
</dbReference>
<dbReference type="InterPro" id="IPR000581">
    <property type="entry name" value="ILV_EDD_N"/>
</dbReference>
<dbReference type="InterPro" id="IPR037237">
    <property type="entry name" value="IlvD/EDD_N"/>
</dbReference>
<dbReference type="NCBIfam" id="TIGR00110">
    <property type="entry name" value="ilvD"/>
    <property type="match status" value="1"/>
</dbReference>
<dbReference type="NCBIfam" id="NF009103">
    <property type="entry name" value="PRK12448.1"/>
    <property type="match status" value="1"/>
</dbReference>
<dbReference type="PANTHER" id="PTHR43661">
    <property type="entry name" value="D-XYLONATE DEHYDRATASE"/>
    <property type="match status" value="1"/>
</dbReference>
<dbReference type="PANTHER" id="PTHR43661:SF3">
    <property type="entry name" value="D-XYLONATE DEHYDRATASE YAGF-RELATED"/>
    <property type="match status" value="1"/>
</dbReference>
<dbReference type="Pfam" id="PF24877">
    <property type="entry name" value="ILV_EDD_C"/>
    <property type="match status" value="1"/>
</dbReference>
<dbReference type="Pfam" id="PF00920">
    <property type="entry name" value="ILVD_EDD_N"/>
    <property type="match status" value="1"/>
</dbReference>
<dbReference type="SUPFAM" id="SSF143975">
    <property type="entry name" value="IlvD/EDD N-terminal domain-like"/>
    <property type="match status" value="1"/>
</dbReference>
<dbReference type="SUPFAM" id="SSF52016">
    <property type="entry name" value="LeuD/IlvD-like"/>
    <property type="match status" value="1"/>
</dbReference>
<dbReference type="PROSITE" id="PS00886">
    <property type="entry name" value="ILVD_EDD_1"/>
    <property type="match status" value="1"/>
</dbReference>
<dbReference type="PROSITE" id="PS00887">
    <property type="entry name" value="ILVD_EDD_2"/>
    <property type="match status" value="1"/>
</dbReference>
<feature type="chain" id="PRO_1000089412" description="Dihydroxy-acid dehydratase">
    <location>
        <begin position="1"/>
        <end position="616"/>
    </location>
</feature>
<feature type="active site" description="Proton acceptor" evidence="1">
    <location>
        <position position="517"/>
    </location>
</feature>
<feature type="binding site" evidence="1">
    <location>
        <position position="81"/>
    </location>
    <ligand>
        <name>Mg(2+)</name>
        <dbReference type="ChEBI" id="CHEBI:18420"/>
    </ligand>
</feature>
<feature type="binding site" evidence="1">
    <location>
        <position position="122"/>
    </location>
    <ligand>
        <name>[2Fe-2S] cluster</name>
        <dbReference type="ChEBI" id="CHEBI:190135"/>
    </ligand>
</feature>
<feature type="binding site" evidence="1">
    <location>
        <position position="123"/>
    </location>
    <ligand>
        <name>Mg(2+)</name>
        <dbReference type="ChEBI" id="CHEBI:18420"/>
    </ligand>
</feature>
<feature type="binding site" description="via carbamate group" evidence="1">
    <location>
        <position position="124"/>
    </location>
    <ligand>
        <name>Mg(2+)</name>
        <dbReference type="ChEBI" id="CHEBI:18420"/>
    </ligand>
</feature>
<feature type="binding site" evidence="1">
    <location>
        <position position="195"/>
    </location>
    <ligand>
        <name>[2Fe-2S] cluster</name>
        <dbReference type="ChEBI" id="CHEBI:190135"/>
    </ligand>
</feature>
<feature type="binding site" evidence="1">
    <location>
        <position position="491"/>
    </location>
    <ligand>
        <name>Mg(2+)</name>
        <dbReference type="ChEBI" id="CHEBI:18420"/>
    </ligand>
</feature>
<feature type="modified residue" description="N6-carboxylysine" evidence="1">
    <location>
        <position position="124"/>
    </location>
</feature>
<name>ILVD_SALSV</name>
<reference key="1">
    <citation type="journal article" date="2011" name="J. Bacteriol.">
        <title>Comparative genomics of 28 Salmonella enterica isolates: evidence for CRISPR-mediated adaptive sublineage evolution.</title>
        <authorList>
            <person name="Fricke W.F."/>
            <person name="Mammel M.K."/>
            <person name="McDermott P.F."/>
            <person name="Tartera C."/>
            <person name="White D.G."/>
            <person name="Leclerc J.E."/>
            <person name="Ravel J."/>
            <person name="Cebula T.A."/>
        </authorList>
    </citation>
    <scope>NUCLEOTIDE SEQUENCE [LARGE SCALE GENOMIC DNA]</scope>
    <source>
        <strain>CVM19633</strain>
    </source>
</reference>
<sequence>MPKYRSATTTHGRNMAGARALWRATGMTDSDFGKPIIAVVNSFTQFVPGHVHLRDLGKLVAEQIEASGGVAKEFNTIAVDDGIAMGHGGMLYSLPSRELIADSVEYMVNAHCADAMVCISNCDKITPGMLMASLRLNIPVIFVSGGPMEAGKTKLSDQIIKLDLVDAMIQGADPKVSDDQSNQVERSACPTCGSCSGMFTANSMNCLTEALGLSQPGNGSLLATHADRKQLFLNAGKRIVELTKRYYEQDDESALPRNIASKAAFENAMTLDIAMGGSTNTVLHLLAAAQEAEIDFTMSDIDKLSRKVPQLCKVAPSTQKYHMEDVHRAGGVLGILGELDRAGLLNRNVKNVLGLTLPQTLEQYDITVTQDEAVKKMFRAGPAGIRTTQAFSQDCRWDSLDDDRAAGCIRSLEYAYSKDGGLAVLYGNFAENGCIVKTAGVDDSILKFTGPAKVYESQDDAVEAILGGKVVEGDVVVIRYEGPKGGPGMQEMLYPTSFLKSMGLGKACALITDGRFSGGTSGLSIGHVSPEAASGGTIALIEDGDTIAIDIPNRSIQLQLNEAEIAARREAQEARGDKAWTPKNRQRQVSFALRAYASLATSADKGAVRDKSKLGG</sequence>
<protein>
    <recommendedName>
        <fullName evidence="1">Dihydroxy-acid dehydratase</fullName>
        <shortName evidence="1">DAD</shortName>
        <ecNumber evidence="1">4.2.1.9</ecNumber>
    </recommendedName>
</protein>
<evidence type="ECO:0000255" key="1">
    <source>
        <dbReference type="HAMAP-Rule" id="MF_00012"/>
    </source>
</evidence>